<organism evidence="7">
    <name type="scientific">Heterocephalus glaber</name>
    <name type="common">Naked mole rat</name>
    <dbReference type="NCBI Taxonomy" id="10181"/>
    <lineage>
        <taxon>Eukaryota</taxon>
        <taxon>Metazoa</taxon>
        <taxon>Chordata</taxon>
        <taxon>Craniata</taxon>
        <taxon>Vertebrata</taxon>
        <taxon>Euteleostomi</taxon>
        <taxon>Mammalia</taxon>
        <taxon>Eutheria</taxon>
        <taxon>Euarchontoglires</taxon>
        <taxon>Glires</taxon>
        <taxon>Rodentia</taxon>
        <taxon>Hystricomorpha</taxon>
        <taxon>Bathyergidae</taxon>
        <taxon>Heterocephalus</taxon>
    </lineage>
</organism>
<protein>
    <recommendedName>
        <fullName evidence="4">Acid ceramidase</fullName>
        <shortName>AC</shortName>
        <shortName evidence="4">ACDase</shortName>
        <shortName>Acid CDase</shortName>
        <ecNumber evidence="1">3.5.1.23</ecNumber>
    </recommendedName>
    <component>
        <recommendedName>
            <fullName evidence="6">Acid ceramidase subunit alpha</fullName>
        </recommendedName>
    </component>
    <component>
        <recommendedName>
            <fullName evidence="6">Acid ceramidase subunit beta</fullName>
        </recommendedName>
    </component>
</protein>
<accession>A0A0P6JG37</accession>
<sequence length="395" mass="45003">MLGRSRLTFVLLAAAVTCAEAQHAPPWTEDCRKSTYPPSGPTYRGPVPWYTINLDLPPYKRWHELMVDKGPMLKIIVNSFKNMVNTFVPSGKVMQMVDQKLPDLLGQFSGPYEEEMKGIADVTEIPLGEIISFNIFYELFTMCTSIITEDKKGHLLHVRNMDFGIFLGWNINNNTWVITEELKPLTVNLDFQRNSKTVFKATSFAGYVGMLTGFKPGQFSLTLNERFSMNGGYLGLLEWILGKKDASWIGFITRSVLENATSYEEAKNILAKTKLLAPAYFILGGNQSGEGCVITRERKDSLDIYELDPKQGRWYVVQTNYDRWKNPLFLDDRRTPAQTCLKRTTQENLSFATLYDILSTKPVLNKLTVFTALMDVTKNHYEAYLRDCPDPCVGW</sequence>
<gene>
    <name evidence="7" type="primary">ASAH1</name>
</gene>
<proteinExistence type="evidence at protein level"/>
<reference key="1">
    <citation type="journal article" date="2011" name="Nature">
        <title>Genome sequencing reveals insights into physiology and longevity of the naked mole rat.</title>
        <authorList>
            <person name="Kim E.B."/>
            <person name="Fang X."/>
            <person name="Fushan A.A."/>
            <person name="Huang Z."/>
            <person name="Lobanov A.V."/>
            <person name="Han L."/>
            <person name="Marino S.M."/>
            <person name="Sun X."/>
            <person name="Turanov A.A."/>
            <person name="Yang P."/>
            <person name="Yim S.H."/>
            <person name="Zhao X."/>
            <person name="Kasaikina M.V."/>
            <person name="Stoletzki N."/>
            <person name="Peng C."/>
            <person name="Polak P."/>
            <person name="Xiong Z."/>
            <person name="Kiezun A."/>
            <person name="Zhu Y."/>
            <person name="Chen Y."/>
            <person name="Kryukov G.V."/>
            <person name="Zhang Q."/>
            <person name="Peshkin L."/>
            <person name="Yang L."/>
            <person name="Bronson R.T."/>
            <person name="Buffenstein R."/>
            <person name="Wang B."/>
            <person name="Han C."/>
            <person name="Li Q."/>
            <person name="Chen L."/>
            <person name="Zhao W."/>
            <person name="Sunyaev S.R."/>
            <person name="Park T.J."/>
            <person name="Zhang G."/>
            <person name="Wang J."/>
            <person name="Gladyshev V.N."/>
        </authorList>
    </citation>
    <scope>NUCLEOTIDE SEQUENCE [LARGE SCALE GENOMIC DNA]</scope>
</reference>
<reference evidence="7" key="2">
    <citation type="journal article" date="2016" name="BMC Genomics">
        <title>FRAMA: from RNA-seq data to annotated mRNA assemblies.</title>
        <authorList>
            <person name="Bens M."/>
            <person name="Sahm A."/>
            <person name="Groth M."/>
            <person name="Jahn N."/>
            <person name="Morhart M."/>
            <person name="Holtze S."/>
            <person name="Hildebrandt T.B."/>
            <person name="Platzer M."/>
            <person name="Szafranski K."/>
        </authorList>
    </citation>
    <scope>NUCLEOTIDE SEQUENCE [LARGE SCALE MRNA]</scope>
    <source>
        <tissue evidence="7">Kidney</tissue>
    </source>
</reference>
<reference key="3">
    <citation type="journal article" date="2018" name="Nat. Commun.">
        <title>Structural basis for the activation of acid ceramidase.</title>
        <authorList>
            <person name="Gebai A."/>
            <person name="Gorelik A."/>
            <person name="Li Z."/>
            <person name="Illes K."/>
            <person name="Nagar B."/>
        </authorList>
    </citation>
    <scope>X-RAY CRYSTALLOGRAPHY (1.40 ANGSTROMS) OF 22-395 OF MUTANT ALA-143</scope>
    <scope>ACTIVE SITE</scope>
    <scope>GLYCOSYLATION AT ASN-173; ASN-259 AND ASN-286</scope>
    <scope>DISULFIDE BOND</scope>
</reference>
<name>ASAH1_HETGA</name>
<dbReference type="EC" id="3.5.1.23" evidence="1"/>
<dbReference type="EMBL" id="AHKG01049371">
    <property type="status" value="NOT_ANNOTATED_CDS"/>
    <property type="molecule type" value="Genomic_DNA"/>
</dbReference>
<dbReference type="EMBL" id="GEBF01000105">
    <property type="protein sequence ID" value="JAO03528.1"/>
    <property type="molecule type" value="Transcribed_RNA"/>
</dbReference>
<dbReference type="RefSeq" id="XP_004853125.1">
    <property type="nucleotide sequence ID" value="XM_004853068.2"/>
</dbReference>
<dbReference type="PDB" id="5U81">
    <property type="method" value="X-ray"/>
    <property type="resolution" value="1.40 A"/>
    <property type="chains" value="A=22-395"/>
</dbReference>
<dbReference type="PDBsum" id="5U81"/>
<dbReference type="SMR" id="A0A0P6JG37"/>
<dbReference type="GlyCosmos" id="A0A0P6JG37">
    <property type="glycosylation" value="4 sites, No reported glycans"/>
</dbReference>
<dbReference type="iPTMnet" id="A0A0P6JG37"/>
<dbReference type="Ensembl" id="ENSHGLT00000051711">
    <property type="protein sequence ID" value="ENSHGLP00000036013"/>
    <property type="gene ID" value="ENSHGLG00000006285"/>
</dbReference>
<dbReference type="GeneID" id="101724913"/>
<dbReference type="KEGG" id="hgl:101724913"/>
<dbReference type="CTD" id="427"/>
<dbReference type="OrthoDB" id="5273684at2759"/>
<dbReference type="UniPathway" id="UPA00222"/>
<dbReference type="Proteomes" id="UP000694906">
    <property type="component" value="Unplaced"/>
</dbReference>
<dbReference type="Bgee" id="ENSHGLG00000006285">
    <property type="expression patterns" value="Expressed in thyroid gland and 10 other cell types or tissues"/>
</dbReference>
<dbReference type="GO" id="GO:0005576">
    <property type="term" value="C:extracellular region"/>
    <property type="evidence" value="ECO:0007669"/>
    <property type="project" value="UniProtKB-SubCell"/>
</dbReference>
<dbReference type="GO" id="GO:0005764">
    <property type="term" value="C:lysosome"/>
    <property type="evidence" value="ECO:0007669"/>
    <property type="project" value="UniProtKB-SubCell"/>
</dbReference>
<dbReference type="GO" id="GO:0016020">
    <property type="term" value="C:membrane"/>
    <property type="evidence" value="ECO:0007669"/>
    <property type="project" value="GOC"/>
</dbReference>
<dbReference type="GO" id="GO:0017064">
    <property type="term" value="F:fatty acid amide hydrolase activity"/>
    <property type="evidence" value="ECO:0007669"/>
    <property type="project" value="InterPro"/>
</dbReference>
<dbReference type="GO" id="GO:0017040">
    <property type="term" value="F:N-acylsphingosine amidohydrolase activity"/>
    <property type="evidence" value="ECO:0007669"/>
    <property type="project" value="UniProtKB-EC"/>
</dbReference>
<dbReference type="GO" id="GO:0006631">
    <property type="term" value="P:fatty acid metabolic process"/>
    <property type="evidence" value="ECO:0007669"/>
    <property type="project" value="InterPro"/>
</dbReference>
<dbReference type="GO" id="GO:0006665">
    <property type="term" value="P:sphingolipid metabolic process"/>
    <property type="evidence" value="ECO:0007669"/>
    <property type="project" value="UniProtKB-UniPathway"/>
</dbReference>
<dbReference type="CDD" id="cd01903">
    <property type="entry name" value="Ntn_AC_NAAA"/>
    <property type="match status" value="1"/>
</dbReference>
<dbReference type="FunFam" id="3.60.60.10:FF:000002">
    <property type="entry name" value="N-acylsphingosine amidohydrolase 1"/>
    <property type="match status" value="1"/>
</dbReference>
<dbReference type="Gene3D" id="3.60.60.10">
    <property type="entry name" value="Penicillin V Acylase, Chain A"/>
    <property type="match status" value="1"/>
</dbReference>
<dbReference type="InterPro" id="IPR016699">
    <property type="entry name" value="Acid_ceramidase-like"/>
</dbReference>
<dbReference type="InterPro" id="IPR029130">
    <property type="entry name" value="Acid_ceramidase_N"/>
</dbReference>
<dbReference type="InterPro" id="IPR029132">
    <property type="entry name" value="CBAH/NAAA_C"/>
</dbReference>
<dbReference type="PANTHER" id="PTHR28583">
    <property type="entry name" value="ACID AMIDASE"/>
    <property type="match status" value="1"/>
</dbReference>
<dbReference type="PANTHER" id="PTHR28583:SF1">
    <property type="entry name" value="ACID CERAMIDASE"/>
    <property type="match status" value="1"/>
</dbReference>
<dbReference type="Pfam" id="PF02275">
    <property type="entry name" value="CBAH"/>
    <property type="match status" value="1"/>
</dbReference>
<dbReference type="Pfam" id="PF15508">
    <property type="entry name" value="NAAA-beta"/>
    <property type="match status" value="1"/>
</dbReference>
<dbReference type="PIRSF" id="PIRSF017632">
    <property type="entry name" value="Acid_ceramidase-like"/>
    <property type="match status" value="1"/>
</dbReference>
<keyword id="KW-0002">3D-structure</keyword>
<keyword id="KW-1015">Disulfide bond</keyword>
<keyword id="KW-0325">Glycoprotein</keyword>
<keyword id="KW-0378">Hydrolase</keyword>
<keyword id="KW-0443">Lipid metabolism</keyword>
<keyword id="KW-0458">Lysosome</keyword>
<keyword id="KW-0964">Secreted</keyword>
<keyword id="KW-0732">Signal</keyword>
<keyword id="KW-0746">Sphingolipid metabolism</keyword>
<keyword id="KW-0865">Zymogen</keyword>
<comment type="function">
    <text evidence="1">Lysosomal ceramidase that hydrolyzes sphingolipid ceramides into sphingosine and free fatty acids at acidic pH (By similarity). Ceramides, sphingosine, and its phosphorylated form sphingosine-1-phosphate are bioactive lipids that mediate cellular signaling pathways regulating several biological processes including cell proliferation, apoptosis and differentiation (By similarity). Has a higher catalytic efficiency towards C12-ceramides versus other ceramides (By similarity). Also catalyzes the reverse reaction allowing the synthesis of ceramides from fatty acids and sphingosine (By similarity). For the reverse synthetic reaction, the natural sphingosine D-erythro isomer is more efficiently utilized as a substrate compared to D-erythro-dihydrosphingosine and D-erythro-phytosphingosine, while the fatty acids with chain lengths of 12 or 14 carbons are the most efficiently used (By similarity). Also has an N-acylethanolamine hydrolase activity (By similarity). By regulating the levels of ceramides, sphingosine and sphingosine-1-phosphate in the epidermis, mediates the calcium-induced differentiation of epidermal keratinocytes (By similarity). Also indirectly regulates tumor necrosis factor/TNF-induced apoptosis (By similarity). By regulating the intracellular balance between ceramides and sphingosine, in adrenocortical cells, probably also acts as a regulator of steroidogenesis (By similarity).</text>
</comment>
<comment type="catalytic activity">
    <reaction evidence="1">
        <text>an N-acylsphing-4-enine + H2O = sphing-4-enine + a fatty acid</text>
        <dbReference type="Rhea" id="RHEA:20856"/>
        <dbReference type="ChEBI" id="CHEBI:15377"/>
        <dbReference type="ChEBI" id="CHEBI:28868"/>
        <dbReference type="ChEBI" id="CHEBI:52639"/>
        <dbReference type="ChEBI" id="CHEBI:57756"/>
        <dbReference type="EC" id="3.5.1.23"/>
    </reaction>
</comment>
<comment type="catalytic activity">
    <reaction evidence="1">
        <text>N-dodecanoylsphing-4-enine + H2O = dodecanoate + sphing-4-enine</text>
        <dbReference type="Rhea" id="RHEA:41291"/>
        <dbReference type="ChEBI" id="CHEBI:15377"/>
        <dbReference type="ChEBI" id="CHEBI:18262"/>
        <dbReference type="ChEBI" id="CHEBI:57756"/>
        <dbReference type="ChEBI" id="CHEBI:72956"/>
    </reaction>
</comment>
<comment type="catalytic activity">
    <reaction evidence="1">
        <text>N-tetradecanoylsphing-4-enine + H2O = tetradecanoate + sphing-4-enine</text>
        <dbReference type="Rhea" id="RHEA:41287"/>
        <dbReference type="ChEBI" id="CHEBI:15377"/>
        <dbReference type="ChEBI" id="CHEBI:30807"/>
        <dbReference type="ChEBI" id="CHEBI:57756"/>
        <dbReference type="ChEBI" id="CHEBI:72957"/>
    </reaction>
</comment>
<comment type="catalytic activity">
    <reaction evidence="1">
        <text>N-hexadecanoylsphing-4-enine + H2O = sphing-4-enine + hexadecanoate</text>
        <dbReference type="Rhea" id="RHEA:38891"/>
        <dbReference type="ChEBI" id="CHEBI:7896"/>
        <dbReference type="ChEBI" id="CHEBI:15377"/>
        <dbReference type="ChEBI" id="CHEBI:57756"/>
        <dbReference type="ChEBI" id="CHEBI:72959"/>
    </reaction>
</comment>
<comment type="catalytic activity">
    <reaction evidence="1">
        <text>N-octadecanoylsphing-4-enine + H2O = sphing-4-enine + octadecanoate</text>
        <dbReference type="Rhea" id="RHEA:41279"/>
        <dbReference type="ChEBI" id="CHEBI:15377"/>
        <dbReference type="ChEBI" id="CHEBI:25629"/>
        <dbReference type="ChEBI" id="CHEBI:57756"/>
        <dbReference type="ChEBI" id="CHEBI:72961"/>
    </reaction>
</comment>
<comment type="catalytic activity">
    <reaction evidence="1">
        <text>N-dodecanoyl-(4R)-hydroxysphinganine + H2O = (4R)-hydroxysphinganine + dodecanoate</text>
        <dbReference type="Rhea" id="RHEA:41303"/>
        <dbReference type="ChEBI" id="CHEBI:15377"/>
        <dbReference type="ChEBI" id="CHEBI:18262"/>
        <dbReference type="ChEBI" id="CHEBI:64124"/>
        <dbReference type="ChEBI" id="CHEBI:78001"/>
    </reaction>
</comment>
<comment type="catalytic activity">
    <reaction evidence="1">
        <text>N-(dodecanoyl)-sphinganine + H2O = dodecanoate + sphinganine</text>
        <dbReference type="Rhea" id="RHEA:45448"/>
        <dbReference type="ChEBI" id="CHEBI:15377"/>
        <dbReference type="ChEBI" id="CHEBI:18262"/>
        <dbReference type="ChEBI" id="CHEBI:57817"/>
        <dbReference type="ChEBI" id="CHEBI:85261"/>
    </reaction>
</comment>
<comment type="catalytic activity">
    <reaction evidence="1">
        <text>N-(acetyl)-sphing-4-enine + H2O = sphing-4-enine + acetate</text>
        <dbReference type="Rhea" id="RHEA:58484"/>
        <dbReference type="ChEBI" id="CHEBI:15377"/>
        <dbReference type="ChEBI" id="CHEBI:30089"/>
        <dbReference type="ChEBI" id="CHEBI:46979"/>
        <dbReference type="ChEBI" id="CHEBI:57756"/>
    </reaction>
</comment>
<comment type="catalytic activity">
    <reaction evidence="1">
        <text>N-(hexanoyl)sphing-4-enine + H2O = hexanoate + sphing-4-enine</text>
        <dbReference type="Rhea" id="RHEA:41295"/>
        <dbReference type="ChEBI" id="CHEBI:15377"/>
        <dbReference type="ChEBI" id="CHEBI:17120"/>
        <dbReference type="ChEBI" id="CHEBI:57756"/>
        <dbReference type="ChEBI" id="CHEBI:63867"/>
    </reaction>
</comment>
<comment type="catalytic activity">
    <reaction evidence="1">
        <text>N-octanoylsphing-4-enine + H2O = octanoate + sphing-4-enine</text>
        <dbReference type="Rhea" id="RHEA:45092"/>
        <dbReference type="ChEBI" id="CHEBI:15377"/>
        <dbReference type="ChEBI" id="CHEBI:25646"/>
        <dbReference type="ChEBI" id="CHEBI:45815"/>
        <dbReference type="ChEBI" id="CHEBI:57756"/>
    </reaction>
</comment>
<comment type="catalytic activity">
    <reaction evidence="1">
        <text>N-(9Z-octadecenoyl)-sphing-4-enine + H2O = sphing-4-enine + (9Z)-octadecenoate</text>
        <dbReference type="Rhea" id="RHEA:41299"/>
        <dbReference type="ChEBI" id="CHEBI:15377"/>
        <dbReference type="ChEBI" id="CHEBI:30823"/>
        <dbReference type="ChEBI" id="CHEBI:57756"/>
        <dbReference type="ChEBI" id="CHEBI:77996"/>
    </reaction>
</comment>
<comment type="catalytic activity">
    <reaction evidence="1">
        <text>N-dodecanoylethanolamine + H2O = dodecanoate + ethanolamine</text>
        <dbReference type="Rhea" id="RHEA:45456"/>
        <dbReference type="ChEBI" id="CHEBI:15377"/>
        <dbReference type="ChEBI" id="CHEBI:18262"/>
        <dbReference type="ChEBI" id="CHEBI:57603"/>
        <dbReference type="ChEBI" id="CHEBI:85263"/>
    </reaction>
</comment>
<comment type="pathway">
    <text evidence="1">Lipid metabolism; sphingolipid metabolism.</text>
</comment>
<comment type="subunit">
    <text evidence="3">Heterodimer; disulfide-linked. The heterodimer is composed of the disulfide-linked alpha and beta chains produced by autocatalytic cleavage of the precursor.</text>
</comment>
<comment type="subcellular location">
    <subcellularLocation>
        <location evidence="1">Lysosome</location>
    </subcellularLocation>
    <subcellularLocation>
        <location evidence="1">Secreted</location>
    </subcellularLocation>
    <text evidence="1">Secretion is extremely low and localization to lysosomes is mannose-6-phosphate receptor-dependent.</text>
</comment>
<comment type="PTM">
    <text evidence="3">N-glycosylated.</text>
</comment>
<comment type="PTM">
    <text evidence="1 3">Proteolytically cleaved into two chains alpha and beta that remain associated via a disulfide bond (PubMed:29692406). Cleavage gives rise to a conformation change that activates the enzyme. The same catalytic Cys residue mediates the autoproteolytic cleavage and subsequent hydrolysis of lipid substrates. The beta chain may undergo an additional C-terminal processing (By similarity).</text>
</comment>
<comment type="similarity">
    <text evidence="5">Belongs to the acid ceramidase family.</text>
</comment>
<feature type="signal peptide" evidence="2">
    <location>
        <begin position="1"/>
        <end position="21"/>
    </location>
</feature>
<feature type="chain" id="PRO_5006128967" description="Acid ceramidase">
    <location>
        <begin position="22"/>
        <end position="395"/>
    </location>
</feature>
<feature type="chain" id="PRO_0000446622" description="Acid ceramidase subunit alpha" evidence="1">
    <location>
        <begin position="22"/>
        <end position="142"/>
    </location>
</feature>
<feature type="chain" id="PRO_0000446623" description="Acid ceramidase subunit beta" evidence="1">
    <location>
        <begin position="143"/>
        <end position="395"/>
    </location>
</feature>
<feature type="active site" description="Nucleophile" evidence="3">
    <location>
        <position position="143"/>
    </location>
</feature>
<feature type="site" description="Important for catalytic activity" evidence="1">
    <location>
        <position position="162"/>
    </location>
</feature>
<feature type="site" description="Important for catalytic activity" evidence="1">
    <location>
        <position position="320"/>
    </location>
</feature>
<feature type="site" description="Important for catalytic activity" evidence="1">
    <location>
        <position position="333"/>
    </location>
</feature>
<feature type="glycosylation site" description="N-linked (GlcNAc...) asparagine" evidence="3 8">
    <location>
        <position position="173"/>
    </location>
</feature>
<feature type="glycosylation site" description="N-linked (GlcNAc...) asparagine" evidence="3 8">
    <location>
        <position position="259"/>
    </location>
</feature>
<feature type="glycosylation site" description="N-linked (GlcNAc...) asparagine" evidence="3 8">
    <location>
        <position position="286"/>
    </location>
</feature>
<feature type="glycosylation site" description="N-linked (GlcNAc...) asparagine" evidence="2">
    <location>
        <position position="348"/>
    </location>
</feature>
<feature type="disulfide bond" description="Interchain (between alpha and beta subunits)" evidence="3 8">
    <location>
        <begin position="31"/>
        <end position="340"/>
    </location>
</feature>
<feature type="disulfide bond" evidence="3 8">
    <location>
        <begin position="388"/>
        <end position="392"/>
    </location>
</feature>
<feature type="mutagenesis site" description="Loss of autoproteolytic cleavage." evidence="3">
    <original>C</original>
    <variation>A</variation>
    <location>
        <position position="143"/>
    </location>
</feature>
<evidence type="ECO:0000250" key="1">
    <source>
        <dbReference type="UniProtKB" id="Q13510"/>
    </source>
</evidence>
<evidence type="ECO:0000255" key="2"/>
<evidence type="ECO:0000269" key="3">
    <source>
    </source>
</evidence>
<evidence type="ECO:0000303" key="4">
    <source>
    </source>
</evidence>
<evidence type="ECO:0000305" key="5"/>
<evidence type="ECO:0000305" key="6">
    <source>
    </source>
</evidence>
<evidence type="ECO:0000312" key="7">
    <source>
        <dbReference type="EMBL" id="JAO03528.1"/>
    </source>
</evidence>
<evidence type="ECO:0007744" key="8">
    <source>
        <dbReference type="PDB" id="5U81"/>
    </source>
</evidence>